<comment type="function">
    <text evidence="2">May be involved in 20S pre-rRNA processing.</text>
</comment>
<comment type="similarity">
    <text evidence="2">Belongs to the TSR2 family.</text>
</comment>
<comment type="sequence caution" evidence="2">
    <conflict type="erroneous initiation">
        <sequence resource="EMBL-CDS" id="AAI06647"/>
    </conflict>
</comment>
<dbReference type="EMBL" id="BC106646">
    <property type="protein sequence ID" value="AAI06647.1"/>
    <property type="status" value="ALT_INIT"/>
    <property type="molecule type" value="mRNA"/>
</dbReference>
<dbReference type="RefSeq" id="XP_018096963.1">
    <property type="nucleotide sequence ID" value="XM_018241474.1"/>
</dbReference>
<dbReference type="SMR" id="Q3KPN2"/>
<dbReference type="AGR" id="Xenbase:XB-GENE-993473"/>
<dbReference type="Xenbase" id="XB-GENE-993473">
    <property type="gene designation" value="tsr2.L"/>
</dbReference>
<dbReference type="Proteomes" id="UP000186698">
    <property type="component" value="Unplaced"/>
</dbReference>
<dbReference type="Bgee" id="733383">
    <property type="expression patterns" value="Expressed in pancreas and 19 other cell types or tissues"/>
</dbReference>
<dbReference type="GO" id="GO:0005634">
    <property type="term" value="C:nucleus"/>
    <property type="evidence" value="ECO:0000318"/>
    <property type="project" value="GO_Central"/>
</dbReference>
<dbReference type="GO" id="GO:0000462">
    <property type="term" value="P:maturation of SSU-rRNA from tricistronic rRNA transcript (SSU-rRNA, 5.8S rRNA, LSU-rRNA)"/>
    <property type="evidence" value="ECO:0000318"/>
    <property type="project" value="GO_Central"/>
</dbReference>
<dbReference type="InterPro" id="IPR019398">
    <property type="entry name" value="Pre-rRNA_process_TSR2"/>
</dbReference>
<dbReference type="PANTHER" id="PTHR21250">
    <property type="entry name" value="PRE-RRNA-PROCESSING PROTEIN TSR2 HOMOLOG"/>
    <property type="match status" value="1"/>
</dbReference>
<dbReference type="Pfam" id="PF10273">
    <property type="entry name" value="WGG"/>
    <property type="match status" value="1"/>
</dbReference>
<reference key="1">
    <citation type="submission" date="2005-10" db="EMBL/GenBank/DDBJ databases">
        <authorList>
            <consortium name="NIH - Xenopus Gene Collection (XGC) project"/>
        </authorList>
    </citation>
    <scope>NUCLEOTIDE SEQUENCE [LARGE SCALE MRNA]</scope>
    <source>
        <tissue>Oocyte</tissue>
    </source>
</reference>
<keyword id="KW-1185">Reference proteome</keyword>
<keyword id="KW-0698">rRNA processing</keyword>
<gene>
    <name type="primary">tsr2</name>
</gene>
<name>TSR2_XENLA</name>
<feature type="chain" id="PRO_0000285590" description="Pre-rRNA-processing protein TSR2 homolog">
    <location>
        <begin position="1"/>
        <end position="189"/>
    </location>
</feature>
<feature type="region of interest" description="Disordered" evidence="1">
    <location>
        <begin position="126"/>
        <end position="189"/>
    </location>
</feature>
<feature type="compositionally biased region" description="Acidic residues" evidence="1">
    <location>
        <begin position="131"/>
        <end position="147"/>
    </location>
</feature>
<feature type="compositionally biased region" description="Low complexity" evidence="1">
    <location>
        <begin position="152"/>
        <end position="169"/>
    </location>
</feature>
<proteinExistence type="evidence at transcript level"/>
<protein>
    <recommendedName>
        <fullName>Pre-rRNA-processing protein TSR2 homolog</fullName>
    </recommendedName>
</protein>
<evidence type="ECO:0000256" key="1">
    <source>
        <dbReference type="SAM" id="MobiDB-lite"/>
    </source>
</evidence>
<evidence type="ECO:0000305" key="2"/>
<organism>
    <name type="scientific">Xenopus laevis</name>
    <name type="common">African clawed frog</name>
    <dbReference type="NCBI Taxonomy" id="8355"/>
    <lineage>
        <taxon>Eukaryota</taxon>
        <taxon>Metazoa</taxon>
        <taxon>Chordata</taxon>
        <taxon>Craniata</taxon>
        <taxon>Vertebrata</taxon>
        <taxon>Euteleostomi</taxon>
        <taxon>Amphibia</taxon>
        <taxon>Batrachia</taxon>
        <taxon>Anura</taxon>
        <taxon>Pipoidea</taxon>
        <taxon>Pipidae</taxon>
        <taxon>Xenopodinae</taxon>
        <taxon>Xenopus</taxon>
        <taxon>Xenopus</taxon>
    </lineage>
</organism>
<accession>Q3KPN2</accession>
<sequence length="189" mass="20578">MAARSVDSRGLFREATKAVLGSWPVLQIAVENGFGGSHSQEKAEWMVGAIDQYFSSNADLEQYEVEDSIMGMMNDEFDTIVEDGSQALVAQQLCVLFSQCRQGETAAVQAKIAQLAQKKYDVRAKVQEVTPSDDEEESSDDEEEAMDCENTPGSSSAASLSGALGPSSAPKKEEEPEDDGWTVVRRKKK</sequence>